<accession>A4SV66</accession>
<comment type="function">
    <text evidence="1">Specifically methylates the N4 position of cytidine in position 1402 (C1402) of 16S rRNA.</text>
</comment>
<comment type="catalytic activity">
    <reaction evidence="1">
        <text>cytidine(1402) in 16S rRNA + S-adenosyl-L-methionine = N(4)-methylcytidine(1402) in 16S rRNA + S-adenosyl-L-homocysteine + H(+)</text>
        <dbReference type="Rhea" id="RHEA:42928"/>
        <dbReference type="Rhea" id="RHEA-COMP:10286"/>
        <dbReference type="Rhea" id="RHEA-COMP:10287"/>
        <dbReference type="ChEBI" id="CHEBI:15378"/>
        <dbReference type="ChEBI" id="CHEBI:57856"/>
        <dbReference type="ChEBI" id="CHEBI:59789"/>
        <dbReference type="ChEBI" id="CHEBI:74506"/>
        <dbReference type="ChEBI" id="CHEBI:82748"/>
        <dbReference type="EC" id="2.1.1.199"/>
    </reaction>
</comment>
<comment type="subcellular location">
    <subcellularLocation>
        <location evidence="1">Cytoplasm</location>
    </subcellularLocation>
</comment>
<comment type="similarity">
    <text evidence="1">Belongs to the methyltransferase superfamily. RsmH family.</text>
</comment>
<evidence type="ECO:0000255" key="1">
    <source>
        <dbReference type="HAMAP-Rule" id="MF_01007"/>
    </source>
</evidence>
<protein>
    <recommendedName>
        <fullName evidence="1">Ribosomal RNA small subunit methyltransferase H</fullName>
        <ecNumber evidence="1">2.1.1.199</ecNumber>
    </recommendedName>
    <alternativeName>
        <fullName evidence="1">16S rRNA m(4)C1402 methyltransferase</fullName>
    </alternativeName>
    <alternativeName>
        <fullName evidence="1">rRNA (cytosine-N(4)-)-methyltransferase RsmH</fullName>
    </alternativeName>
</protein>
<keyword id="KW-0963">Cytoplasm</keyword>
<keyword id="KW-0489">Methyltransferase</keyword>
<keyword id="KW-1185">Reference proteome</keyword>
<keyword id="KW-0698">rRNA processing</keyword>
<keyword id="KW-0949">S-adenosyl-L-methionine</keyword>
<keyword id="KW-0808">Transferase</keyword>
<gene>
    <name evidence="1" type="primary">rsmH</name>
    <name type="synonym">mraW</name>
    <name type="ordered locus">Pnuc_0159</name>
</gene>
<proteinExistence type="inferred from homology"/>
<name>RSMH_POLAQ</name>
<organism>
    <name type="scientific">Polynucleobacter asymbioticus (strain DSM 18221 / CIP 109841 / QLW-P1DMWA-1)</name>
    <name type="common">Polynucleobacter necessarius subsp. asymbioticus</name>
    <dbReference type="NCBI Taxonomy" id="312153"/>
    <lineage>
        <taxon>Bacteria</taxon>
        <taxon>Pseudomonadati</taxon>
        <taxon>Pseudomonadota</taxon>
        <taxon>Betaproteobacteria</taxon>
        <taxon>Burkholderiales</taxon>
        <taxon>Burkholderiaceae</taxon>
        <taxon>Polynucleobacter</taxon>
    </lineage>
</organism>
<reference key="1">
    <citation type="journal article" date="2012" name="Stand. Genomic Sci.">
        <title>Complete genome sequence of Polynucleobacter necessarius subsp. asymbioticus type strain (QLW-P1DMWA-1(T)).</title>
        <authorList>
            <person name="Meincke L."/>
            <person name="Copeland A."/>
            <person name="Lapidus A."/>
            <person name="Lucas S."/>
            <person name="Berry K.W."/>
            <person name="Del Rio T.G."/>
            <person name="Hammon N."/>
            <person name="Dalin E."/>
            <person name="Tice H."/>
            <person name="Pitluck S."/>
            <person name="Richardson P."/>
            <person name="Bruce D."/>
            <person name="Goodwin L."/>
            <person name="Han C."/>
            <person name="Tapia R."/>
            <person name="Detter J.C."/>
            <person name="Schmutz J."/>
            <person name="Brettin T."/>
            <person name="Larimer F."/>
            <person name="Land M."/>
            <person name="Hauser L."/>
            <person name="Kyrpides N.C."/>
            <person name="Ivanova N."/>
            <person name="Goker M."/>
            <person name="Woyke T."/>
            <person name="Wu Q.L."/>
            <person name="Pockl M."/>
            <person name="Hahn M.W."/>
            <person name="Klenk H.P."/>
        </authorList>
    </citation>
    <scope>NUCLEOTIDE SEQUENCE [LARGE SCALE GENOMIC DNA]</scope>
    <source>
        <strain>DSM 18221 / CIP 109841 / QLW-P1DMWA-1</strain>
    </source>
</reference>
<feature type="chain" id="PRO_0000387036" description="Ribosomal RNA small subunit methyltransferase H">
    <location>
        <begin position="1"/>
        <end position="316"/>
    </location>
</feature>
<feature type="binding site" evidence="1">
    <location>
        <begin position="42"/>
        <end position="44"/>
    </location>
    <ligand>
        <name>S-adenosyl-L-methionine</name>
        <dbReference type="ChEBI" id="CHEBI:59789"/>
    </ligand>
</feature>
<feature type="binding site" evidence="1">
    <location>
        <position position="62"/>
    </location>
    <ligand>
        <name>S-adenosyl-L-methionine</name>
        <dbReference type="ChEBI" id="CHEBI:59789"/>
    </ligand>
</feature>
<feature type="binding site" evidence="1">
    <location>
        <position position="86"/>
    </location>
    <ligand>
        <name>S-adenosyl-L-methionine</name>
        <dbReference type="ChEBI" id="CHEBI:59789"/>
    </ligand>
</feature>
<feature type="binding site" evidence="1">
    <location>
        <position position="104"/>
    </location>
    <ligand>
        <name>S-adenosyl-L-methionine</name>
        <dbReference type="ChEBI" id="CHEBI:59789"/>
    </ligand>
</feature>
<feature type="binding site" evidence="1">
    <location>
        <position position="111"/>
    </location>
    <ligand>
        <name>S-adenosyl-L-methionine</name>
        <dbReference type="ChEBI" id="CHEBI:59789"/>
    </ligand>
</feature>
<sequence>MNITHRPVLLAEAVTALISGPLIQEKNAAKKIVVIDGTFGRGGHTQALLKSLEMSARVISFDKDLDAISVAQQIQDPRFTIVHDSFAHMDQYAQAESVDGILLDLGISSPQVDEAHRGFSFRREGPLDMRMNTDQGLTAAEWLEQAPQEEITRVIKTYGEERFAFQIAKAIVAKREEGLSPKTTTELASLVASVVRTREAGQDPATRTFQALRIFINRELEDLELGLKAALKLLKPGARLAVISFHSLEDRIVKQFFQAHAKVEIPRGLPVREKDLPQSALEIIGRVKPSDLEISENPRARSAIMRVAEKRMGAPV</sequence>
<dbReference type="EC" id="2.1.1.199" evidence="1"/>
<dbReference type="EMBL" id="CP000655">
    <property type="protein sequence ID" value="ABP33380.1"/>
    <property type="molecule type" value="Genomic_DNA"/>
</dbReference>
<dbReference type="RefSeq" id="WP_011902005.1">
    <property type="nucleotide sequence ID" value="NC_009379.1"/>
</dbReference>
<dbReference type="SMR" id="A4SV66"/>
<dbReference type="GeneID" id="31480508"/>
<dbReference type="KEGG" id="pnu:Pnuc_0159"/>
<dbReference type="eggNOG" id="COG0275">
    <property type="taxonomic scope" value="Bacteria"/>
</dbReference>
<dbReference type="HOGENOM" id="CLU_038422_2_0_4"/>
<dbReference type="Proteomes" id="UP000000231">
    <property type="component" value="Chromosome"/>
</dbReference>
<dbReference type="GO" id="GO:0005737">
    <property type="term" value="C:cytoplasm"/>
    <property type="evidence" value="ECO:0007669"/>
    <property type="project" value="UniProtKB-SubCell"/>
</dbReference>
<dbReference type="GO" id="GO:0071424">
    <property type="term" value="F:rRNA (cytosine-N4-)-methyltransferase activity"/>
    <property type="evidence" value="ECO:0007669"/>
    <property type="project" value="UniProtKB-UniRule"/>
</dbReference>
<dbReference type="GO" id="GO:0070475">
    <property type="term" value="P:rRNA base methylation"/>
    <property type="evidence" value="ECO:0007669"/>
    <property type="project" value="UniProtKB-UniRule"/>
</dbReference>
<dbReference type="Gene3D" id="1.10.150.170">
    <property type="entry name" value="Putative methyltransferase TM0872, insert domain"/>
    <property type="match status" value="1"/>
</dbReference>
<dbReference type="Gene3D" id="3.40.50.150">
    <property type="entry name" value="Vaccinia Virus protein VP39"/>
    <property type="match status" value="1"/>
</dbReference>
<dbReference type="HAMAP" id="MF_01007">
    <property type="entry name" value="16SrRNA_methyltr_H"/>
    <property type="match status" value="1"/>
</dbReference>
<dbReference type="InterPro" id="IPR002903">
    <property type="entry name" value="RsmH"/>
</dbReference>
<dbReference type="InterPro" id="IPR023397">
    <property type="entry name" value="SAM-dep_MeTrfase_MraW_recog"/>
</dbReference>
<dbReference type="InterPro" id="IPR029063">
    <property type="entry name" value="SAM-dependent_MTases_sf"/>
</dbReference>
<dbReference type="NCBIfam" id="TIGR00006">
    <property type="entry name" value="16S rRNA (cytosine(1402)-N(4))-methyltransferase RsmH"/>
    <property type="match status" value="1"/>
</dbReference>
<dbReference type="PANTHER" id="PTHR11265:SF0">
    <property type="entry name" value="12S RRNA N4-METHYLCYTIDINE METHYLTRANSFERASE"/>
    <property type="match status" value="1"/>
</dbReference>
<dbReference type="PANTHER" id="PTHR11265">
    <property type="entry name" value="S-ADENOSYL-METHYLTRANSFERASE MRAW"/>
    <property type="match status" value="1"/>
</dbReference>
<dbReference type="Pfam" id="PF01795">
    <property type="entry name" value="Methyltransf_5"/>
    <property type="match status" value="1"/>
</dbReference>
<dbReference type="PIRSF" id="PIRSF004486">
    <property type="entry name" value="MraW"/>
    <property type="match status" value="1"/>
</dbReference>
<dbReference type="SUPFAM" id="SSF81799">
    <property type="entry name" value="Putative methyltransferase TM0872, insert domain"/>
    <property type="match status" value="1"/>
</dbReference>
<dbReference type="SUPFAM" id="SSF53335">
    <property type="entry name" value="S-adenosyl-L-methionine-dependent methyltransferases"/>
    <property type="match status" value="1"/>
</dbReference>